<comment type="subunit">
    <text evidence="1">Part of the 30S ribosomal subunit.</text>
</comment>
<comment type="subcellular location">
    <subcellularLocation>
        <location>Plastid</location>
        <location>Chloroplast</location>
    </subcellularLocation>
</comment>
<comment type="similarity">
    <text evidence="2">Belongs to the universal ribosomal protein uS3 family.</text>
</comment>
<geneLocation type="chloroplast"/>
<keyword id="KW-0150">Chloroplast</keyword>
<keyword id="KW-0934">Plastid</keyword>
<keyword id="KW-0687">Ribonucleoprotein</keyword>
<keyword id="KW-0689">Ribosomal protein</keyword>
<keyword id="KW-0694">RNA-binding</keyword>
<keyword id="KW-0699">rRNA-binding</keyword>
<name>RR3_GOSBA</name>
<organism>
    <name type="scientific">Gossypium barbadense</name>
    <name type="common">Sea Island cotton</name>
    <name type="synonym">Hibiscus barbadensis</name>
    <dbReference type="NCBI Taxonomy" id="3634"/>
    <lineage>
        <taxon>Eukaryota</taxon>
        <taxon>Viridiplantae</taxon>
        <taxon>Streptophyta</taxon>
        <taxon>Embryophyta</taxon>
        <taxon>Tracheophyta</taxon>
        <taxon>Spermatophyta</taxon>
        <taxon>Magnoliopsida</taxon>
        <taxon>eudicotyledons</taxon>
        <taxon>Gunneridae</taxon>
        <taxon>Pentapetalae</taxon>
        <taxon>rosids</taxon>
        <taxon>malvids</taxon>
        <taxon>Malvales</taxon>
        <taxon>Malvaceae</taxon>
        <taxon>Malvoideae</taxon>
        <taxon>Gossypium</taxon>
    </lineage>
</organism>
<reference key="1">
    <citation type="journal article" date="2006" name="Genes Genet. Syst.">
        <title>Complete nucleotide sequence of the cotton (Gossypium barbadense L.) chloroplast genome with a comparative analysis of sequences among 9 dicot plants.</title>
        <authorList>
            <person name="Ibrahim R.I.H."/>
            <person name="Azuma J."/>
            <person name="Sakamoto M."/>
        </authorList>
    </citation>
    <scope>NUCLEOTIDE SEQUENCE [LARGE SCALE GENOMIC DNA]</scope>
</reference>
<gene>
    <name type="primary">rps3</name>
</gene>
<sequence length="218" mass="25165">MGQKINPLGFRLGTTQSHHSLWFAQPKKYSEGLQEDKKIRDCIKNYVQKNTRLSSGVEGIARIEIQKRLDLIQVIIYMGFPKLLIEDKPRKLEELQMNVQKELNCMNRKLNIAITRIGNPYGHPNILAEFIAGQLKNRVSFRKAMKKAIELTEQADTKGIQIQIAGRIDGKEIARVEWIREGRVPLQTIGAKIEYCSYRVRTIYGVLGIKIWIFIDEE</sequence>
<evidence type="ECO:0000250" key="1"/>
<evidence type="ECO:0000305" key="2"/>
<accession>A0ZZ73</accession>
<protein>
    <recommendedName>
        <fullName evidence="2">Small ribosomal subunit protein uS3c</fullName>
    </recommendedName>
    <alternativeName>
        <fullName>30S ribosomal protein S3, chloroplastic</fullName>
    </alternativeName>
</protein>
<feature type="chain" id="PRO_0000276991" description="Small ribosomal subunit protein uS3c">
    <location>
        <begin position="1"/>
        <end position="218"/>
    </location>
</feature>
<feature type="domain" description="KH type-2">
    <location>
        <begin position="43"/>
        <end position="118"/>
    </location>
</feature>
<proteinExistence type="inferred from homology"/>
<dbReference type="EMBL" id="AP009123">
    <property type="protein sequence ID" value="BAF41285.1"/>
    <property type="molecule type" value="Genomic_DNA"/>
</dbReference>
<dbReference type="RefSeq" id="YP_913225.1">
    <property type="nucleotide sequence ID" value="NC_008641.1"/>
</dbReference>
<dbReference type="SMR" id="A0ZZ73"/>
<dbReference type="GeneID" id="4575255"/>
<dbReference type="GO" id="GO:0009507">
    <property type="term" value="C:chloroplast"/>
    <property type="evidence" value="ECO:0007669"/>
    <property type="project" value="UniProtKB-SubCell"/>
</dbReference>
<dbReference type="GO" id="GO:0022627">
    <property type="term" value="C:cytosolic small ribosomal subunit"/>
    <property type="evidence" value="ECO:0007669"/>
    <property type="project" value="TreeGrafter"/>
</dbReference>
<dbReference type="GO" id="GO:0019843">
    <property type="term" value="F:rRNA binding"/>
    <property type="evidence" value="ECO:0007669"/>
    <property type="project" value="UniProtKB-UniRule"/>
</dbReference>
<dbReference type="GO" id="GO:0003735">
    <property type="term" value="F:structural constituent of ribosome"/>
    <property type="evidence" value="ECO:0007669"/>
    <property type="project" value="InterPro"/>
</dbReference>
<dbReference type="GO" id="GO:0006412">
    <property type="term" value="P:translation"/>
    <property type="evidence" value="ECO:0007669"/>
    <property type="project" value="UniProtKB-UniRule"/>
</dbReference>
<dbReference type="CDD" id="cd02412">
    <property type="entry name" value="KH-II_30S_S3"/>
    <property type="match status" value="1"/>
</dbReference>
<dbReference type="FunFam" id="3.30.1140.32:FF:000003">
    <property type="entry name" value="30S ribosomal protein S3, chloroplastic"/>
    <property type="match status" value="1"/>
</dbReference>
<dbReference type="FunFam" id="3.30.300.20:FF:000008">
    <property type="entry name" value="30S ribosomal protein S3, chloroplastic"/>
    <property type="match status" value="1"/>
</dbReference>
<dbReference type="Gene3D" id="3.30.300.20">
    <property type="match status" value="1"/>
</dbReference>
<dbReference type="Gene3D" id="3.30.1140.32">
    <property type="entry name" value="Ribosomal protein S3, C-terminal domain"/>
    <property type="match status" value="1"/>
</dbReference>
<dbReference type="HAMAP" id="MF_01309_B">
    <property type="entry name" value="Ribosomal_uS3_B"/>
    <property type="match status" value="1"/>
</dbReference>
<dbReference type="InterPro" id="IPR015946">
    <property type="entry name" value="KH_dom-like_a/b"/>
</dbReference>
<dbReference type="InterPro" id="IPR004044">
    <property type="entry name" value="KH_dom_type_2"/>
</dbReference>
<dbReference type="InterPro" id="IPR009019">
    <property type="entry name" value="KH_sf_prok-type"/>
</dbReference>
<dbReference type="InterPro" id="IPR036419">
    <property type="entry name" value="Ribosomal_S3_C_sf"/>
</dbReference>
<dbReference type="InterPro" id="IPR005704">
    <property type="entry name" value="Ribosomal_uS3_bac-typ"/>
</dbReference>
<dbReference type="InterPro" id="IPR001351">
    <property type="entry name" value="Ribosomal_uS3_C"/>
</dbReference>
<dbReference type="InterPro" id="IPR018280">
    <property type="entry name" value="Ribosomal_uS3_CS"/>
</dbReference>
<dbReference type="NCBIfam" id="TIGR01009">
    <property type="entry name" value="rpsC_bact"/>
    <property type="match status" value="1"/>
</dbReference>
<dbReference type="PANTHER" id="PTHR11760">
    <property type="entry name" value="30S/40S RIBOSOMAL PROTEIN S3"/>
    <property type="match status" value="1"/>
</dbReference>
<dbReference type="PANTHER" id="PTHR11760:SF19">
    <property type="entry name" value="SMALL RIBOSOMAL SUBUNIT PROTEIN US3C"/>
    <property type="match status" value="1"/>
</dbReference>
<dbReference type="Pfam" id="PF00189">
    <property type="entry name" value="Ribosomal_S3_C"/>
    <property type="match status" value="1"/>
</dbReference>
<dbReference type="SUPFAM" id="SSF54814">
    <property type="entry name" value="Prokaryotic type KH domain (KH-domain type II)"/>
    <property type="match status" value="1"/>
</dbReference>
<dbReference type="SUPFAM" id="SSF54821">
    <property type="entry name" value="Ribosomal protein S3 C-terminal domain"/>
    <property type="match status" value="1"/>
</dbReference>
<dbReference type="PROSITE" id="PS50823">
    <property type="entry name" value="KH_TYPE_2"/>
    <property type="match status" value="1"/>
</dbReference>
<dbReference type="PROSITE" id="PS00548">
    <property type="entry name" value="RIBOSOMAL_S3"/>
    <property type="match status" value="1"/>
</dbReference>